<keyword id="KW-0066">ATP synthesis</keyword>
<keyword id="KW-0997">Cell inner membrane</keyword>
<keyword id="KW-1003">Cell membrane</keyword>
<keyword id="KW-0138">CF(0)</keyword>
<keyword id="KW-0375">Hydrogen ion transport</keyword>
<keyword id="KW-0406">Ion transport</keyword>
<keyword id="KW-0472">Membrane</keyword>
<keyword id="KW-0812">Transmembrane</keyword>
<keyword id="KW-1133">Transmembrane helix</keyword>
<keyword id="KW-0813">Transport</keyword>
<name>ATPF_NITEC</name>
<protein>
    <recommendedName>
        <fullName evidence="1">ATP synthase subunit b</fullName>
    </recommendedName>
    <alternativeName>
        <fullName evidence="1">ATP synthase F(0) sector subunit b</fullName>
    </alternativeName>
    <alternativeName>
        <fullName evidence="1">ATPase subunit I</fullName>
    </alternativeName>
    <alternativeName>
        <fullName evidence="1">F-type ATPase subunit b</fullName>
        <shortName evidence="1">F-ATPase subunit b</shortName>
    </alternativeName>
</protein>
<accession>Q0AJB4</accession>
<feature type="chain" id="PRO_0000368630" description="ATP synthase subunit b">
    <location>
        <begin position="1"/>
        <end position="157"/>
    </location>
</feature>
<feature type="transmembrane region" description="Helical" evidence="1">
    <location>
        <begin position="7"/>
        <end position="29"/>
    </location>
</feature>
<dbReference type="EMBL" id="CP000450">
    <property type="protein sequence ID" value="ABI58557.1"/>
    <property type="molecule type" value="Genomic_DNA"/>
</dbReference>
<dbReference type="RefSeq" id="WP_011633401.1">
    <property type="nucleotide sequence ID" value="NC_008344.1"/>
</dbReference>
<dbReference type="SMR" id="Q0AJB4"/>
<dbReference type="STRING" id="335283.Neut_0273"/>
<dbReference type="KEGG" id="net:Neut_0273"/>
<dbReference type="eggNOG" id="COG0711">
    <property type="taxonomic scope" value="Bacteria"/>
</dbReference>
<dbReference type="HOGENOM" id="CLU_079215_4_5_4"/>
<dbReference type="OrthoDB" id="9788020at2"/>
<dbReference type="Proteomes" id="UP000001966">
    <property type="component" value="Chromosome"/>
</dbReference>
<dbReference type="GO" id="GO:0005886">
    <property type="term" value="C:plasma membrane"/>
    <property type="evidence" value="ECO:0007669"/>
    <property type="project" value="UniProtKB-SubCell"/>
</dbReference>
<dbReference type="GO" id="GO:0045259">
    <property type="term" value="C:proton-transporting ATP synthase complex"/>
    <property type="evidence" value="ECO:0007669"/>
    <property type="project" value="UniProtKB-KW"/>
</dbReference>
<dbReference type="GO" id="GO:0046933">
    <property type="term" value="F:proton-transporting ATP synthase activity, rotational mechanism"/>
    <property type="evidence" value="ECO:0007669"/>
    <property type="project" value="UniProtKB-UniRule"/>
</dbReference>
<dbReference type="GO" id="GO:0046961">
    <property type="term" value="F:proton-transporting ATPase activity, rotational mechanism"/>
    <property type="evidence" value="ECO:0007669"/>
    <property type="project" value="TreeGrafter"/>
</dbReference>
<dbReference type="CDD" id="cd06503">
    <property type="entry name" value="ATP-synt_Fo_b"/>
    <property type="match status" value="1"/>
</dbReference>
<dbReference type="FunFam" id="1.20.5.620:FF:000001">
    <property type="entry name" value="ATP synthase subunit b"/>
    <property type="match status" value="1"/>
</dbReference>
<dbReference type="Gene3D" id="6.10.250.1580">
    <property type="match status" value="1"/>
</dbReference>
<dbReference type="HAMAP" id="MF_01398">
    <property type="entry name" value="ATP_synth_b_bprime"/>
    <property type="match status" value="1"/>
</dbReference>
<dbReference type="InterPro" id="IPR028987">
    <property type="entry name" value="ATP_synth_B-like_membr_sf"/>
</dbReference>
<dbReference type="InterPro" id="IPR002146">
    <property type="entry name" value="ATP_synth_b/b'su_bac/chlpt"/>
</dbReference>
<dbReference type="InterPro" id="IPR005864">
    <property type="entry name" value="ATP_synth_F0_bsu_bac"/>
</dbReference>
<dbReference type="InterPro" id="IPR050059">
    <property type="entry name" value="ATP_synthase_B_chain"/>
</dbReference>
<dbReference type="NCBIfam" id="TIGR01144">
    <property type="entry name" value="ATP_synt_b"/>
    <property type="match status" value="1"/>
</dbReference>
<dbReference type="NCBIfam" id="NF004411">
    <property type="entry name" value="PRK05759.1-2"/>
    <property type="match status" value="1"/>
</dbReference>
<dbReference type="PANTHER" id="PTHR33445:SF1">
    <property type="entry name" value="ATP SYNTHASE SUBUNIT B"/>
    <property type="match status" value="1"/>
</dbReference>
<dbReference type="PANTHER" id="PTHR33445">
    <property type="entry name" value="ATP SYNTHASE SUBUNIT B', CHLOROPLASTIC"/>
    <property type="match status" value="1"/>
</dbReference>
<dbReference type="Pfam" id="PF00430">
    <property type="entry name" value="ATP-synt_B"/>
    <property type="match status" value="1"/>
</dbReference>
<dbReference type="SUPFAM" id="SSF81573">
    <property type="entry name" value="F1F0 ATP synthase subunit B, membrane domain"/>
    <property type="match status" value="1"/>
</dbReference>
<reference key="1">
    <citation type="journal article" date="2007" name="Environ. Microbiol.">
        <title>Whole-genome analysis of the ammonia-oxidizing bacterium, Nitrosomonas eutropha C91: implications for niche adaptation.</title>
        <authorList>
            <person name="Stein L.Y."/>
            <person name="Arp D.J."/>
            <person name="Berube P.M."/>
            <person name="Chain P.S."/>
            <person name="Hauser L."/>
            <person name="Jetten M.S."/>
            <person name="Klotz M.G."/>
            <person name="Larimer F.W."/>
            <person name="Norton J.M."/>
            <person name="Op den Camp H.J.M."/>
            <person name="Shin M."/>
            <person name="Wei X."/>
        </authorList>
    </citation>
    <scope>NUCLEOTIDE SEQUENCE [LARGE SCALE GENOMIC DNA]</scope>
    <source>
        <strain>DSM 101675 / C91 / Nm57</strain>
    </source>
</reference>
<gene>
    <name evidence="1" type="primary">atpF</name>
    <name type="ordered locus">Neut_0273</name>
</gene>
<sequence length="157" mass="17500">MNINFTLVSQAIAFSIFIWFTTKFVWPYLLRAIEERQQKIADGLAAGERGKKELELASQRSSEVLKEAKQRAGEIVIQAEKRASDIIEEAKKNARVEGEKILAGAKAEIQHEIFSARESLRQQVAGLAVQGASKILRREVNAKAHADLLASIETELK</sequence>
<comment type="function">
    <text evidence="1">F(1)F(0) ATP synthase produces ATP from ADP in the presence of a proton or sodium gradient. F-type ATPases consist of two structural domains, F(1) containing the extramembraneous catalytic core and F(0) containing the membrane proton channel, linked together by a central stalk and a peripheral stalk. During catalysis, ATP synthesis in the catalytic domain of F(1) is coupled via a rotary mechanism of the central stalk subunits to proton translocation.</text>
</comment>
<comment type="function">
    <text evidence="1">Component of the F(0) channel, it forms part of the peripheral stalk, linking F(1) to F(0).</text>
</comment>
<comment type="subunit">
    <text evidence="1">F-type ATPases have 2 components, F(1) - the catalytic core - and F(0) - the membrane proton channel. F(1) has five subunits: alpha(3), beta(3), gamma(1), delta(1), epsilon(1). F(0) has three main subunits: a(1), b(2) and c(10-14). The alpha and beta chains form an alternating ring which encloses part of the gamma chain. F(1) is attached to F(0) by a central stalk formed by the gamma and epsilon chains, while a peripheral stalk is formed by the delta and b chains.</text>
</comment>
<comment type="subcellular location">
    <subcellularLocation>
        <location evidence="1">Cell inner membrane</location>
        <topology evidence="1">Single-pass membrane protein</topology>
    </subcellularLocation>
</comment>
<comment type="similarity">
    <text evidence="1">Belongs to the ATPase B chain family.</text>
</comment>
<evidence type="ECO:0000255" key="1">
    <source>
        <dbReference type="HAMAP-Rule" id="MF_01398"/>
    </source>
</evidence>
<proteinExistence type="inferred from homology"/>
<organism>
    <name type="scientific">Nitrosomonas eutropha (strain DSM 101675 / C91 / Nm57)</name>
    <dbReference type="NCBI Taxonomy" id="335283"/>
    <lineage>
        <taxon>Bacteria</taxon>
        <taxon>Pseudomonadati</taxon>
        <taxon>Pseudomonadota</taxon>
        <taxon>Betaproteobacteria</taxon>
        <taxon>Nitrosomonadales</taxon>
        <taxon>Nitrosomonadaceae</taxon>
        <taxon>Nitrosomonas</taxon>
    </lineage>
</organism>